<comment type="function">
    <text evidence="1 5 6 7 8 9 11 12">Transcriptional repressor involved in the regulation of the circadian rhythm by negatively regulating the activity of the clock genes and clock-controlled genes (PubMed:11278948, PubMed:14672706, PubMed:15193144, PubMed:15560782, PubMed:18411297, PubMed:19786558, PubMed:25083013). Acts as the negative limb of a novel autoregulatory feedback loop (DEC loop) which differs from the one formed by the PER and CRY transcriptional repressors (PER/CRY loop). Both these loops are interlocked as it represses the expression of PER1 and in turn is repressed by PER1/2 and CRY1/2. Represses the activity of the circadian transcriptional activator: CLOCK-BMAL1 heterodimer by competing for the binding to E-box elements (5'-CACGTG-3') found within the promoters of its target genes (PubMed:25083013). Negatively regulates its own expression and the expression of DBP and BHLHE41/DEC2. Acts as a corepressor of RXR and the RXR-LXR heterodimers and represses the ligand-induced RXRA/B/G, NR1H3/LXRA, NR1H4 and VDR transactivation activity. Inhibits HNF1A-mediated transactivation of CYP1A2, CYP2E1 AND CYP3A11 (By similarity).</text>
</comment>
<comment type="subunit">
    <text evidence="1 7 11">Homodimer (By similarity). Heterodimer with BHLHE40/DEC1 (PubMed:15193144). Interacts with CIART and BMAL1 (By similarity). Interacts with RXRA (PubMed:19786558). Interacts with NR0B2 and HNF1A (By similarity).</text>
</comment>
<comment type="interaction">
    <interactant intactId="EBI-10988877">
        <id>Q9C0J9</id>
    </interactant>
    <interactant intactId="EBI-447269">
        <id>Q16665</id>
        <label>HIF1A</label>
    </interactant>
    <organismsDiffer>false</organismsDiffer>
    <experiments>2</experiments>
</comment>
<comment type="subcellular location">
    <subcellularLocation>
        <location evidence="2 3">Nucleus</location>
    </subcellularLocation>
</comment>
<comment type="tissue specificity">
    <text>Highly expressed in skeletal muscle and brain, moderately expressed in pancreas and heart, weakly expressed in placenta, lung, liver and kidney.</text>
</comment>
<comment type="polymorphism">
    <text evidence="10 12">Genetic variations in BHLHE41 are associated with the familial natural short sleep 1 (FNSS1) phenotype, an autosomal dominant trait [MIM:612975]. Individuals with this trait require less sleep in any 24-hour period than is typical for their age group.</text>
</comment>
<dbReference type="EMBL" id="AB044088">
    <property type="protein sequence ID" value="BAB21502.1"/>
    <property type="molecule type" value="mRNA"/>
</dbReference>
<dbReference type="EMBL" id="EF015896">
    <property type="protein sequence ID" value="ABM64207.1"/>
    <property type="molecule type" value="Genomic_DNA"/>
</dbReference>
<dbReference type="EMBL" id="CH471094">
    <property type="protein sequence ID" value="EAW96527.1"/>
    <property type="molecule type" value="Genomic_DNA"/>
</dbReference>
<dbReference type="CCDS" id="CCDS8706.1"/>
<dbReference type="PIR" id="JC7583">
    <property type="entry name" value="JC7583"/>
</dbReference>
<dbReference type="RefSeq" id="NP_110389.1">
    <property type="nucleotide sequence ID" value="NM_030762.3"/>
</dbReference>
<dbReference type="SMR" id="Q9C0J9"/>
<dbReference type="BioGRID" id="122654">
    <property type="interactions" value="39"/>
</dbReference>
<dbReference type="DIP" id="DIP-59904N"/>
<dbReference type="FunCoup" id="Q9C0J9">
    <property type="interactions" value="1208"/>
</dbReference>
<dbReference type="IntAct" id="Q9C0J9">
    <property type="interactions" value="10"/>
</dbReference>
<dbReference type="STRING" id="9606.ENSP00000242728"/>
<dbReference type="iPTMnet" id="Q9C0J9"/>
<dbReference type="PhosphoSitePlus" id="Q9C0J9"/>
<dbReference type="BioMuta" id="BHLHE41"/>
<dbReference type="DMDM" id="20137459"/>
<dbReference type="jPOST" id="Q9C0J9"/>
<dbReference type="MassIVE" id="Q9C0J9"/>
<dbReference type="PaxDb" id="9606-ENSP00000242728"/>
<dbReference type="PeptideAtlas" id="Q9C0J9"/>
<dbReference type="ProteomicsDB" id="80065"/>
<dbReference type="TopDownProteomics" id="Q9C0J9"/>
<dbReference type="Antibodypedia" id="24289">
    <property type="antibodies" value="459 antibodies from 32 providers"/>
</dbReference>
<dbReference type="DNASU" id="79365"/>
<dbReference type="Ensembl" id="ENST00000242728.5">
    <property type="protein sequence ID" value="ENSP00000242728.4"/>
    <property type="gene ID" value="ENSG00000123095.6"/>
</dbReference>
<dbReference type="GeneID" id="79365"/>
<dbReference type="KEGG" id="hsa:79365"/>
<dbReference type="MANE-Select" id="ENST00000242728.5">
    <property type="protein sequence ID" value="ENSP00000242728.4"/>
    <property type="RefSeq nucleotide sequence ID" value="NM_030762.3"/>
    <property type="RefSeq protein sequence ID" value="NP_110389.1"/>
</dbReference>
<dbReference type="UCSC" id="uc001rhb.4">
    <property type="organism name" value="human"/>
</dbReference>
<dbReference type="AGR" id="HGNC:16617"/>
<dbReference type="CTD" id="79365"/>
<dbReference type="DisGeNET" id="79365"/>
<dbReference type="GeneCards" id="BHLHE41"/>
<dbReference type="HGNC" id="HGNC:16617">
    <property type="gene designation" value="BHLHE41"/>
</dbReference>
<dbReference type="HPA" id="ENSG00000123095">
    <property type="expression patterns" value="Tissue enhanced (retina, skeletal muscle)"/>
</dbReference>
<dbReference type="MalaCards" id="BHLHE41"/>
<dbReference type="MIM" id="606200">
    <property type="type" value="gene"/>
</dbReference>
<dbReference type="MIM" id="612975">
    <property type="type" value="phenotype"/>
</dbReference>
<dbReference type="neXtProt" id="NX_Q9C0J9"/>
<dbReference type="OpenTargets" id="ENSG00000123095"/>
<dbReference type="PharmGKB" id="PA164716636"/>
<dbReference type="VEuPathDB" id="HostDB:ENSG00000123095"/>
<dbReference type="eggNOG" id="KOG4304">
    <property type="taxonomic scope" value="Eukaryota"/>
</dbReference>
<dbReference type="GeneTree" id="ENSGT00940000161014"/>
<dbReference type="HOGENOM" id="CLU_049895_0_0_1"/>
<dbReference type="InParanoid" id="Q9C0J9"/>
<dbReference type="OMA" id="MDEGIPR"/>
<dbReference type="OrthoDB" id="690068at2759"/>
<dbReference type="PAN-GO" id="Q9C0J9">
    <property type="GO annotations" value="7 GO annotations based on evolutionary models"/>
</dbReference>
<dbReference type="PhylomeDB" id="Q9C0J9"/>
<dbReference type="TreeFam" id="TF330859"/>
<dbReference type="PathwayCommons" id="Q9C0J9"/>
<dbReference type="Reactome" id="R-HSA-1368108">
    <property type="pathway name" value="BMAL1:CLOCK,NPAS2 activates circadian gene expression"/>
</dbReference>
<dbReference type="Reactome" id="R-HSA-400253">
    <property type="pathway name" value="Circadian Clock"/>
</dbReference>
<dbReference type="SignaLink" id="Q9C0J9"/>
<dbReference type="SIGNOR" id="Q9C0J9"/>
<dbReference type="BioGRID-ORCS" id="79365">
    <property type="hits" value="25 hits in 1169 CRISPR screens"/>
</dbReference>
<dbReference type="ChiTaRS" id="BHLHE41">
    <property type="organism name" value="human"/>
</dbReference>
<dbReference type="GeneWiki" id="BHLHB3"/>
<dbReference type="GenomeRNAi" id="79365"/>
<dbReference type="Pharos" id="Q9C0J9">
    <property type="development level" value="Tbio"/>
</dbReference>
<dbReference type="PRO" id="PR:Q9C0J9"/>
<dbReference type="Proteomes" id="UP000005640">
    <property type="component" value="Chromosome 12"/>
</dbReference>
<dbReference type="RNAct" id="Q9C0J9">
    <property type="molecule type" value="protein"/>
</dbReference>
<dbReference type="Bgee" id="ENSG00000123095">
    <property type="expression patterns" value="Expressed in right uterine tube and 195 other cell types or tissues"/>
</dbReference>
<dbReference type="ExpressionAtlas" id="Q9C0J9">
    <property type="expression patterns" value="baseline and differential"/>
</dbReference>
<dbReference type="GO" id="GO:0000785">
    <property type="term" value="C:chromatin"/>
    <property type="evidence" value="ECO:0000247"/>
    <property type="project" value="NTNU_SB"/>
</dbReference>
<dbReference type="GO" id="GO:0005634">
    <property type="term" value="C:nucleus"/>
    <property type="evidence" value="ECO:0000318"/>
    <property type="project" value="GO_Central"/>
</dbReference>
<dbReference type="GO" id="GO:0043425">
    <property type="term" value="F:bHLH transcription factor binding"/>
    <property type="evidence" value="ECO:0000353"/>
    <property type="project" value="BHF-UCL"/>
</dbReference>
<dbReference type="GO" id="GO:0000981">
    <property type="term" value="F:DNA-binding transcription factor activity, RNA polymerase II-specific"/>
    <property type="evidence" value="ECO:0000250"/>
    <property type="project" value="BHF-UCL"/>
</dbReference>
<dbReference type="GO" id="GO:0001227">
    <property type="term" value="F:DNA-binding transcription repressor activity, RNA polymerase II-specific"/>
    <property type="evidence" value="ECO:0000314"/>
    <property type="project" value="GO_Central"/>
</dbReference>
<dbReference type="GO" id="GO:0070888">
    <property type="term" value="F:E-box binding"/>
    <property type="evidence" value="ECO:0000314"/>
    <property type="project" value="BHF-UCL"/>
</dbReference>
<dbReference type="GO" id="GO:0042826">
    <property type="term" value="F:histone deacetylase binding"/>
    <property type="evidence" value="ECO:0000250"/>
    <property type="project" value="BHF-UCL"/>
</dbReference>
<dbReference type="GO" id="GO:0043426">
    <property type="term" value="F:MRF binding"/>
    <property type="evidence" value="ECO:0000250"/>
    <property type="project" value="BHF-UCL"/>
</dbReference>
<dbReference type="GO" id="GO:0046982">
    <property type="term" value="F:protein heterodimerization activity"/>
    <property type="evidence" value="ECO:0000353"/>
    <property type="project" value="BHF-UCL"/>
</dbReference>
<dbReference type="GO" id="GO:0042803">
    <property type="term" value="F:protein homodimerization activity"/>
    <property type="evidence" value="ECO:0000250"/>
    <property type="project" value="BHF-UCL"/>
</dbReference>
<dbReference type="GO" id="GO:0000978">
    <property type="term" value="F:RNA polymerase II cis-regulatory region sequence-specific DNA binding"/>
    <property type="evidence" value="ECO:0000250"/>
    <property type="project" value="BHF-UCL"/>
</dbReference>
<dbReference type="GO" id="GO:0061629">
    <property type="term" value="F:RNA polymerase II-specific DNA-binding transcription factor binding"/>
    <property type="evidence" value="ECO:0000250"/>
    <property type="project" value="BHF-UCL"/>
</dbReference>
<dbReference type="GO" id="GO:1990837">
    <property type="term" value="F:sequence-specific double-stranded DNA binding"/>
    <property type="evidence" value="ECO:0000314"/>
    <property type="project" value="ARUK-UCL"/>
</dbReference>
<dbReference type="GO" id="GO:0032922">
    <property type="term" value="P:circadian regulation of gene expression"/>
    <property type="evidence" value="ECO:0000318"/>
    <property type="project" value="GO_Central"/>
</dbReference>
<dbReference type="GO" id="GO:0045892">
    <property type="term" value="P:negative regulation of DNA-templated transcription"/>
    <property type="evidence" value="ECO:0000250"/>
    <property type="project" value="UniProtKB"/>
</dbReference>
<dbReference type="GO" id="GO:0010832">
    <property type="term" value="P:negative regulation of myotube differentiation"/>
    <property type="evidence" value="ECO:0000250"/>
    <property type="project" value="BHF-UCL"/>
</dbReference>
<dbReference type="GO" id="GO:0010944">
    <property type="term" value="P:negative regulation of transcription by competitive promoter binding"/>
    <property type="evidence" value="ECO:0000250"/>
    <property type="project" value="BHF-UCL"/>
</dbReference>
<dbReference type="GO" id="GO:0000122">
    <property type="term" value="P:negative regulation of transcription by RNA polymerase II"/>
    <property type="evidence" value="ECO:0000314"/>
    <property type="project" value="BHF-UCL"/>
</dbReference>
<dbReference type="GO" id="GO:0050767">
    <property type="term" value="P:regulation of neurogenesis"/>
    <property type="evidence" value="ECO:0000318"/>
    <property type="project" value="GO_Central"/>
</dbReference>
<dbReference type="CDD" id="cd19750">
    <property type="entry name" value="bHLH-O_DEC2"/>
    <property type="match status" value="1"/>
</dbReference>
<dbReference type="FunFam" id="4.10.280.10:FF:000020">
    <property type="entry name" value="class E basic helix-loop-helix protein 40"/>
    <property type="match status" value="1"/>
</dbReference>
<dbReference type="Gene3D" id="6.10.250.980">
    <property type="match status" value="1"/>
</dbReference>
<dbReference type="Gene3D" id="4.10.280.10">
    <property type="entry name" value="Helix-loop-helix DNA-binding domain"/>
    <property type="match status" value="1"/>
</dbReference>
<dbReference type="InterPro" id="IPR011598">
    <property type="entry name" value="bHLH_dom"/>
</dbReference>
<dbReference type="InterPro" id="IPR050370">
    <property type="entry name" value="HES_HEY"/>
</dbReference>
<dbReference type="InterPro" id="IPR036638">
    <property type="entry name" value="HLH_DNA-bd_sf"/>
</dbReference>
<dbReference type="InterPro" id="IPR003650">
    <property type="entry name" value="Orange_dom"/>
</dbReference>
<dbReference type="PANTHER" id="PTHR10985">
    <property type="entry name" value="BASIC HELIX-LOOP-HELIX TRANSCRIPTION FACTOR, HES-RELATED"/>
    <property type="match status" value="1"/>
</dbReference>
<dbReference type="Pfam" id="PF07527">
    <property type="entry name" value="Hairy_orange"/>
    <property type="match status" value="1"/>
</dbReference>
<dbReference type="Pfam" id="PF00010">
    <property type="entry name" value="HLH"/>
    <property type="match status" value="1"/>
</dbReference>
<dbReference type="SMART" id="SM00353">
    <property type="entry name" value="HLH"/>
    <property type="match status" value="1"/>
</dbReference>
<dbReference type="SMART" id="SM00511">
    <property type="entry name" value="ORANGE"/>
    <property type="match status" value="1"/>
</dbReference>
<dbReference type="SUPFAM" id="SSF47459">
    <property type="entry name" value="HLH, helix-loop-helix DNA-binding domain"/>
    <property type="match status" value="1"/>
</dbReference>
<dbReference type="SUPFAM" id="SSF158457">
    <property type="entry name" value="Orange domain-like"/>
    <property type="match status" value="1"/>
</dbReference>
<dbReference type="PROSITE" id="PS50888">
    <property type="entry name" value="BHLH"/>
    <property type="match status" value="1"/>
</dbReference>
<dbReference type="PROSITE" id="PS51054">
    <property type="entry name" value="ORANGE"/>
    <property type="match status" value="1"/>
</dbReference>
<evidence type="ECO:0000250" key="1">
    <source>
        <dbReference type="UniProtKB" id="Q99PV5"/>
    </source>
</evidence>
<evidence type="ECO:0000255" key="2">
    <source>
        <dbReference type="PROSITE-ProRule" id="PRU00380"/>
    </source>
</evidence>
<evidence type="ECO:0000255" key="3">
    <source>
        <dbReference type="PROSITE-ProRule" id="PRU00981"/>
    </source>
</evidence>
<evidence type="ECO:0000256" key="4">
    <source>
        <dbReference type="SAM" id="MobiDB-lite"/>
    </source>
</evidence>
<evidence type="ECO:0000269" key="5">
    <source>
    </source>
</evidence>
<evidence type="ECO:0000269" key="6">
    <source>
    </source>
</evidence>
<evidence type="ECO:0000269" key="7">
    <source>
    </source>
</evidence>
<evidence type="ECO:0000269" key="8">
    <source>
    </source>
</evidence>
<evidence type="ECO:0000269" key="9">
    <source>
    </source>
</evidence>
<evidence type="ECO:0000269" key="10">
    <source>
    </source>
</evidence>
<evidence type="ECO:0000269" key="11">
    <source>
    </source>
</evidence>
<evidence type="ECO:0000269" key="12">
    <source>
    </source>
</evidence>
<evidence type="ECO:0000303" key="13">
    <source>
    </source>
</evidence>
<evidence type="ECO:0000305" key="14"/>
<evidence type="ECO:0000312" key="15">
    <source>
        <dbReference type="HGNC" id="HGNC:16617"/>
    </source>
</evidence>
<evidence type="ECO:0007744" key="16">
    <source>
    </source>
</evidence>
<evidence type="ECO:0007744" key="17">
    <source>
    </source>
</evidence>
<reference key="1">
    <citation type="journal article" date="2001" name="Biochem. Biophys. Res. Commun.">
        <title>Molecular cloning and characterization of DEC2, a new member of basic helix-loop-helix proteins.</title>
        <authorList>
            <person name="Fujimoto K."/>
            <person name="Shen M."/>
            <person name="Noshiro M."/>
            <person name="Matsubara K."/>
            <person name="Shingu S."/>
            <person name="Honda K."/>
            <person name="Yoshida E."/>
            <person name="Suardita K."/>
            <person name="Matsuda Y."/>
            <person name="Kato Y."/>
        </authorList>
    </citation>
    <scope>NUCLEOTIDE SEQUENCE [MRNA]</scope>
</reference>
<reference key="2">
    <citation type="submission" date="2006-09" db="EMBL/GenBank/DDBJ databases">
        <authorList>
            <consortium name="NHLBI resequencing and genotyping service (RS&amp;G)"/>
        </authorList>
    </citation>
    <scope>NUCLEOTIDE SEQUENCE [GENOMIC DNA]</scope>
</reference>
<reference key="3">
    <citation type="submission" date="2005-07" db="EMBL/GenBank/DDBJ databases">
        <authorList>
            <person name="Mural R.J."/>
            <person name="Istrail S."/>
            <person name="Sutton G.G."/>
            <person name="Florea L."/>
            <person name="Halpern A.L."/>
            <person name="Mobarry C.M."/>
            <person name="Lippert R."/>
            <person name="Walenz B."/>
            <person name="Shatkay H."/>
            <person name="Dew I."/>
            <person name="Miller J.R."/>
            <person name="Flanigan M.J."/>
            <person name="Edwards N.J."/>
            <person name="Bolanos R."/>
            <person name="Fasulo D."/>
            <person name="Halldorsson B.V."/>
            <person name="Hannenhalli S."/>
            <person name="Turner R."/>
            <person name="Yooseph S."/>
            <person name="Lu F."/>
            <person name="Nusskern D.R."/>
            <person name="Shue B.C."/>
            <person name="Zheng X.H."/>
            <person name="Zhong F."/>
            <person name="Delcher A.L."/>
            <person name="Huson D.H."/>
            <person name="Kravitz S.A."/>
            <person name="Mouchard L."/>
            <person name="Reinert K."/>
            <person name="Remington K.A."/>
            <person name="Clark A.G."/>
            <person name="Waterman M.S."/>
            <person name="Eichler E.E."/>
            <person name="Adams M.D."/>
            <person name="Hunkapiller M.W."/>
            <person name="Myers E.W."/>
            <person name="Venter J.C."/>
        </authorList>
    </citation>
    <scope>NUCLEOTIDE SEQUENCE [LARGE SCALE GENOMIC DNA]</scope>
</reference>
<reference key="4">
    <citation type="journal article" date="2001" name="J. Biol. Chem.">
        <title>The basic helix-loop-helix protein, SHARP-1, represses transcription by a histone deacetylase-dependent and histone deacetylase-independent mechanism.</title>
        <authorList>
            <person name="Garriga-Canut M."/>
            <person name="Roopra A."/>
            <person name="Buckley N.J."/>
        </authorList>
    </citation>
    <scope>FUNCTION</scope>
</reference>
<reference key="5">
    <citation type="journal article" date="2004" name="Biochem. Biophys. Res. Commun.">
        <title>A novel autofeedback loop of Dec1 transcription involved in circadian rhythm regulation.</title>
        <authorList>
            <person name="Kawamoto T."/>
            <person name="Noshiro M."/>
            <person name="Sato F."/>
            <person name="Maemura K."/>
            <person name="Takeda N."/>
            <person name="Nagai R."/>
            <person name="Iwata T."/>
            <person name="Fujimoto K."/>
            <person name="Furukawa M."/>
            <person name="Miyazaki K."/>
            <person name="Honma S."/>
            <person name="Honma K.I."/>
            <person name="Kato Y."/>
        </authorList>
    </citation>
    <scope>FUNCTION</scope>
</reference>
<reference key="6">
    <citation type="journal article" date="2004" name="Biochem. J.">
        <title>DNA binding, but not interaction with Bmal1, is responsible for DEC1-mediated transcription regulation of the circadian gene mPer1.</title>
        <authorList>
            <person name="Li Y."/>
            <person name="Song X."/>
            <person name="Ma Y."/>
            <person name="Liu J."/>
            <person name="Yang D."/>
            <person name="Yan B."/>
        </authorList>
    </citation>
    <scope>FUNCTION</scope>
    <scope>HETERODIMERIZATION WITH BHLHE40/DEC1</scope>
</reference>
<reference key="7">
    <citation type="journal article" date="2004" name="Eur. J. Biochem.">
        <title>Functional analysis of the basic helix-loop-helix transcription factor DEC1 in circadian regulation. Interaction with BMAL1.</title>
        <authorList>
            <person name="Sato F."/>
            <person name="Kawamoto T."/>
            <person name="Fujimoto K."/>
            <person name="Noshiro M."/>
            <person name="Honda K.K."/>
            <person name="Honma S."/>
            <person name="Honma K."/>
            <person name="Kato Y."/>
        </authorList>
    </citation>
    <scope>FUNCTION</scope>
</reference>
<reference key="8">
    <citation type="journal article" date="2008" name="Mol. Cell. Biol.">
        <title>DEC1 modulates the circadian phase of clock gene expression.</title>
        <authorList>
            <person name="Nakashima A."/>
            <person name="Kawamoto T."/>
            <person name="Honda K.K."/>
            <person name="Ueshima T."/>
            <person name="Noshiro M."/>
            <person name="Iwata T."/>
            <person name="Fujimoto K."/>
            <person name="Kubo H."/>
            <person name="Honma S."/>
            <person name="Yorioka N."/>
            <person name="Kohno N."/>
            <person name="Kato Y."/>
        </authorList>
    </citation>
    <scope>FUNCTION</scope>
</reference>
<reference key="9">
    <citation type="journal article" date="2009" name="Mol. Pharmacol.">
        <title>The basic helix-loop-helix proteins differentiated embryo chondrocyte (DEC) 1 and DEC2 function as corepressors of retinoid X receptors.</title>
        <authorList>
            <person name="Cho Y."/>
            <person name="Noshiro M."/>
            <person name="Choi M."/>
            <person name="Morita K."/>
            <person name="Kawamoto T."/>
            <person name="Fujimoto K."/>
            <person name="Kato Y."/>
            <person name="Makishima M."/>
        </authorList>
    </citation>
    <scope>FUNCTION</scope>
    <scope>INTERACTION WITH RXRA</scope>
    <scope>MUTAGENESIS OF 70-LEU-LEU-71</scope>
</reference>
<reference key="10">
    <citation type="journal article" date="2015" name="Mol. Cell. Proteomics">
        <title>System-wide analysis of SUMOylation dynamics in response to replication stress reveals novel small ubiquitin-like modified target proteins and acceptor lysines relevant for genome stability.</title>
        <authorList>
            <person name="Xiao Z."/>
            <person name="Chang J.G."/>
            <person name="Hendriks I.A."/>
            <person name="Sigurdsson J.O."/>
            <person name="Olsen J.V."/>
            <person name="Vertegaal A.C."/>
        </authorList>
    </citation>
    <scope>SUMOYLATION [LARGE SCALE ANALYSIS] AT LYS-210 AND LYS-266</scope>
    <scope>IDENTIFICATION BY MASS SPECTROMETRY [LARGE SCALE ANALYSIS]</scope>
</reference>
<reference key="11">
    <citation type="journal article" date="2017" name="Nat. Struct. Mol. Biol.">
        <title>Site-specific mapping of the human SUMO proteome reveals co-modification with phosphorylation.</title>
        <authorList>
            <person name="Hendriks I.A."/>
            <person name="Lyon D."/>
            <person name="Young C."/>
            <person name="Jensen L.J."/>
            <person name="Vertegaal A.C."/>
            <person name="Nielsen M.L."/>
        </authorList>
    </citation>
    <scope>SUMOYLATION [LARGE SCALE ANALYSIS] AT LYS-31; LYS-121; LYS-210 AND LYS-266</scope>
    <scope>IDENTIFICATION BY MASS SPECTROMETRY [LARGE SCALE ANALYSIS]</scope>
</reference>
<reference key="12">
    <citation type="journal article" date="2009" name="Science">
        <title>The transcriptional repressor DEC2 regulates sleep length in mammals.</title>
        <authorList>
            <person name="He Y."/>
            <person name="Jones C.R."/>
            <person name="Fujiki N."/>
            <person name="Xu Y."/>
            <person name="Guo B."/>
            <person name="Holder J.L. Jr."/>
            <person name="Rossner M.J."/>
            <person name="Nishino S."/>
            <person name="Fu Y.H."/>
        </authorList>
    </citation>
    <scope>VARIANT ARG-384</scope>
    <scope>ASSOCIATION OF VARIANT ARG-384 WITH SHORT SLEEP PHENOTYPE</scope>
    <scope>POLYMORPHISM</scope>
</reference>
<reference key="13">
    <citation type="journal article" date="2014" name="Sleep">
        <title>A novel BHLHE41 variant is associated with short sleep and resistance to sleep deprivation in humans.</title>
        <authorList>
            <person name="Pellegrino R."/>
            <person name="Kavakli I.H."/>
            <person name="Goel N."/>
            <person name="Cardinale C.J."/>
            <person name="Dinges D.F."/>
            <person name="Kuna S.T."/>
            <person name="Maislin G."/>
            <person name="Van Dongen H.P."/>
            <person name="Tufik S."/>
            <person name="Hogenesch J.B."/>
            <person name="Hakonarson H."/>
            <person name="Pack A.I."/>
        </authorList>
    </citation>
    <scope>VARIANTS HIS-362 AND GLN-384</scope>
    <scope>CHARACTERIZATION OF VARIANTS HIS-362; ARG-384 AND GLN-384</scope>
    <scope>FUNCTION</scope>
    <scope>POLYMORPHISM</scope>
</reference>
<accession>Q9C0J9</accession>
<accession>A2I2N8</accession>
<organism>
    <name type="scientific">Homo sapiens</name>
    <name type="common">Human</name>
    <dbReference type="NCBI Taxonomy" id="9606"/>
    <lineage>
        <taxon>Eukaryota</taxon>
        <taxon>Metazoa</taxon>
        <taxon>Chordata</taxon>
        <taxon>Craniata</taxon>
        <taxon>Vertebrata</taxon>
        <taxon>Euteleostomi</taxon>
        <taxon>Mammalia</taxon>
        <taxon>Eutheria</taxon>
        <taxon>Euarchontoglires</taxon>
        <taxon>Primates</taxon>
        <taxon>Haplorrhini</taxon>
        <taxon>Catarrhini</taxon>
        <taxon>Hominidae</taxon>
        <taxon>Homo</taxon>
    </lineage>
</organism>
<keyword id="KW-0090">Biological rhythms</keyword>
<keyword id="KW-0238">DNA-binding</keyword>
<keyword id="KW-1017">Isopeptide bond</keyword>
<keyword id="KW-0539">Nucleus</keyword>
<keyword id="KW-1267">Proteomics identification</keyword>
<keyword id="KW-1185">Reference proteome</keyword>
<keyword id="KW-0678">Repressor</keyword>
<keyword id="KW-0804">Transcription</keyword>
<keyword id="KW-0805">Transcription regulation</keyword>
<keyword id="KW-0832">Ubl conjugation</keyword>
<gene>
    <name evidence="15" type="primary">BHLHE41</name>
    <name type="synonym">BHLHB3</name>
    <name evidence="13" type="synonym">DEC2</name>
    <name type="synonym">SHARP1</name>
</gene>
<name>BHE41_HUMAN</name>
<sequence length="482" mass="50498">MDEGIPHLQERQLLEHRDFIGLDYSSLYMCKPKRSMKRDDTKDTYKLPHRLIEKKRRDRINECIAQLKDLLPEHLKLTTLGHLEKAVVLELTLKHLKALTALTEQQHQKIIALQNGERSLKSPIQSDLDAFHSGFQTCAKEVLQYLSRFESWTPREPRCVQLINHLHAVATQFLPTPQLLTQQVPLSKGTGAPSAAGSAAAPCLERAGQKLEPLAYCVPVIQRTQPSAELAAENDTDTDSGYGGEAEARPDREKGKGAGASRVTIKQEPPGEDSPAPKRMKLDSRGGGSGGGPGGGAAAAAAALLGPDPAAAAALLRPDAALLSSLVAFGGGGGAPFPQPAAAAAPFCLPFCFLSPSAAAAYVQPFLDKSGLEKYLYPAAAAAPFPLLYPGIPAPAAAAAAAAAAAAAAAAFPCLSSVLSPPPEKAGAAAATLLPHEVAPLGAPHPQHPHGRTHLPFAGPREPGNPESSAQEDPSQPGKEAP</sequence>
<protein>
    <recommendedName>
        <fullName evidence="14">Class E basic helix-loop-helix protein 41</fullName>
        <shortName>bHLHe41</shortName>
    </recommendedName>
    <alternativeName>
        <fullName>Class B basic helix-loop-helix protein 3</fullName>
        <shortName>bHLHb3</shortName>
    </alternativeName>
    <alternativeName>
        <fullName>Differentially expressed in chondrocytes protein 2</fullName>
        <shortName>hDEC2</shortName>
    </alternativeName>
    <alternativeName>
        <fullName>Enhancer-of-split and hairy-related protein 1</fullName>
        <shortName>SHARP-1</shortName>
    </alternativeName>
</protein>
<proteinExistence type="evidence at protein level"/>
<feature type="chain" id="PRO_0000127147" description="Class E basic helix-loop-helix protein 41">
    <location>
        <begin position="1"/>
        <end position="482"/>
    </location>
</feature>
<feature type="domain" description="bHLH" evidence="3">
    <location>
        <begin position="44"/>
        <end position="99"/>
    </location>
</feature>
<feature type="domain" description="Orange" evidence="2">
    <location>
        <begin position="131"/>
        <end position="166"/>
    </location>
</feature>
<feature type="region of interest" description="Necessary for interaction with RXRA and repressor activity towards RXRA" evidence="11">
    <location>
        <begin position="67"/>
        <end position="71"/>
    </location>
</feature>
<feature type="region of interest" description="Disordered" evidence="4">
    <location>
        <begin position="228"/>
        <end position="298"/>
    </location>
</feature>
<feature type="region of interest" description="Disordered" evidence="4">
    <location>
        <begin position="438"/>
        <end position="482"/>
    </location>
</feature>
<feature type="compositionally biased region" description="Basic and acidic residues" evidence="4">
    <location>
        <begin position="246"/>
        <end position="256"/>
    </location>
</feature>
<feature type="compositionally biased region" description="Gly residues" evidence="4">
    <location>
        <begin position="285"/>
        <end position="297"/>
    </location>
</feature>
<feature type="cross-link" description="Glycyl lysine isopeptide (Lys-Gly) (interchain with G-Cter in SUMO2)" evidence="17">
    <location>
        <position position="31"/>
    </location>
</feature>
<feature type="cross-link" description="Glycyl lysine isopeptide (Lys-Gly) (interchain with G-Cter in SUMO2)" evidence="17">
    <location>
        <position position="121"/>
    </location>
</feature>
<feature type="cross-link" description="Glycyl lysine isopeptide (Lys-Gly) (interchain with G-Cter in SUMO2)" evidence="16 17">
    <location>
        <position position="210"/>
    </location>
</feature>
<feature type="cross-link" description="Glycyl lysine isopeptide (Lys-Gly) (interchain with G-Cter in SUMO2)" evidence="16 17">
    <location>
        <position position="266"/>
    </location>
</feature>
<feature type="sequence variant" id="VAR_082585" description="Affects sleep duration; abolishes inhibition of CLOCK-BMAL1 and NPAS2/BMAL1 transactivation activities; dbSNP:rs1591838266." evidence="12">
    <original>Y</original>
    <variation>H</variation>
    <location>
        <position position="362"/>
    </location>
</feature>
<feature type="sequence variant" id="VAR_082586" description="Affects sleep duration; increases inhibition of CLOCK-BMAL1 and NPAS2/BMAL1 transactivation activities; dbSNP:rs121912617." evidence="12">
    <original>P</original>
    <variation>Q</variation>
    <location>
        <position position="384"/>
    </location>
</feature>
<feature type="sequence variant" id="VAR_063259" description="Affects sleep duration; abolishes inhibition of CLOCK-BMAL1 and NPAS2/BMAL1 transactivation activities; dbSNP:rs121912617." evidence="10">
    <original>P</original>
    <variation>R</variation>
    <location>
        <position position="384"/>
    </location>
</feature>
<feature type="mutagenesis site" description="Abolishes RXRA repression." evidence="11">
    <original>LL</original>
    <variation>AA</variation>
    <location>
        <begin position="70"/>
        <end position="71"/>
    </location>
</feature>